<reference key="1">
    <citation type="submission" date="2007-05" db="EMBL/GenBank/DDBJ databases">
        <title>Complete sequence of Dehalococcoides sp. BAV1.</title>
        <authorList>
            <consortium name="US DOE Joint Genome Institute"/>
            <person name="Copeland A."/>
            <person name="Lucas S."/>
            <person name="Lapidus A."/>
            <person name="Barry K."/>
            <person name="Detter J.C."/>
            <person name="Glavina del Rio T."/>
            <person name="Hammon N."/>
            <person name="Israni S."/>
            <person name="Pitluck S."/>
            <person name="Lowry S."/>
            <person name="Clum A."/>
            <person name="Schmutz J."/>
            <person name="Larimer F."/>
            <person name="Land M."/>
            <person name="Hauser L."/>
            <person name="Kyrpides N."/>
            <person name="Kim E."/>
            <person name="Ritalahti K.M."/>
            <person name="Loeffler F."/>
            <person name="Richardson P."/>
        </authorList>
    </citation>
    <scope>NUCLEOTIDE SEQUENCE [LARGE SCALE GENOMIC DNA]</scope>
    <source>
        <strain>ATCC BAA-2100 / JCM 16839 / KCTC 5957 / BAV1</strain>
    </source>
</reference>
<gene>
    <name evidence="1" type="primary">def</name>
    <name type="ordered locus">DehaBAV1_0687</name>
</gene>
<dbReference type="EC" id="3.5.1.88" evidence="1"/>
<dbReference type="EMBL" id="CP000688">
    <property type="protein sequence ID" value="ABQ17271.1"/>
    <property type="molecule type" value="Genomic_DNA"/>
</dbReference>
<dbReference type="SMR" id="A5FRA7"/>
<dbReference type="KEGG" id="deb:DehaBAV1_0687"/>
<dbReference type="PATRIC" id="fig|216389.18.peg.736"/>
<dbReference type="HOGENOM" id="CLU_061901_2_1_0"/>
<dbReference type="GO" id="GO:0046872">
    <property type="term" value="F:metal ion binding"/>
    <property type="evidence" value="ECO:0007669"/>
    <property type="project" value="UniProtKB-KW"/>
</dbReference>
<dbReference type="GO" id="GO:0042586">
    <property type="term" value="F:peptide deformylase activity"/>
    <property type="evidence" value="ECO:0007669"/>
    <property type="project" value="UniProtKB-UniRule"/>
</dbReference>
<dbReference type="GO" id="GO:0043686">
    <property type="term" value="P:co-translational protein modification"/>
    <property type="evidence" value="ECO:0007669"/>
    <property type="project" value="TreeGrafter"/>
</dbReference>
<dbReference type="GO" id="GO:0006412">
    <property type="term" value="P:translation"/>
    <property type="evidence" value="ECO:0007669"/>
    <property type="project" value="UniProtKB-UniRule"/>
</dbReference>
<dbReference type="CDD" id="cd00487">
    <property type="entry name" value="Pep_deformylase"/>
    <property type="match status" value="1"/>
</dbReference>
<dbReference type="Gene3D" id="3.90.45.10">
    <property type="entry name" value="Peptide deformylase"/>
    <property type="match status" value="1"/>
</dbReference>
<dbReference type="HAMAP" id="MF_00163">
    <property type="entry name" value="Pep_deformylase"/>
    <property type="match status" value="1"/>
</dbReference>
<dbReference type="InterPro" id="IPR023635">
    <property type="entry name" value="Peptide_deformylase"/>
</dbReference>
<dbReference type="InterPro" id="IPR036821">
    <property type="entry name" value="Peptide_deformylase_sf"/>
</dbReference>
<dbReference type="NCBIfam" id="TIGR00079">
    <property type="entry name" value="pept_deformyl"/>
    <property type="match status" value="1"/>
</dbReference>
<dbReference type="NCBIfam" id="NF001159">
    <property type="entry name" value="PRK00150.1-3"/>
    <property type="match status" value="1"/>
</dbReference>
<dbReference type="PANTHER" id="PTHR10458">
    <property type="entry name" value="PEPTIDE DEFORMYLASE"/>
    <property type="match status" value="1"/>
</dbReference>
<dbReference type="PANTHER" id="PTHR10458:SF22">
    <property type="entry name" value="PEPTIDE DEFORMYLASE"/>
    <property type="match status" value="1"/>
</dbReference>
<dbReference type="Pfam" id="PF01327">
    <property type="entry name" value="Pep_deformylase"/>
    <property type="match status" value="1"/>
</dbReference>
<dbReference type="PIRSF" id="PIRSF004749">
    <property type="entry name" value="Pep_def"/>
    <property type="match status" value="1"/>
</dbReference>
<dbReference type="PRINTS" id="PR01576">
    <property type="entry name" value="PDEFORMYLASE"/>
</dbReference>
<dbReference type="SUPFAM" id="SSF56420">
    <property type="entry name" value="Peptide deformylase"/>
    <property type="match status" value="1"/>
</dbReference>
<comment type="function">
    <text evidence="1">Removes the formyl group from the N-terminal Met of newly synthesized proteins. Requires at least a dipeptide for an efficient rate of reaction. N-terminal L-methionine is a prerequisite for activity but the enzyme has broad specificity at other positions.</text>
</comment>
<comment type="catalytic activity">
    <reaction evidence="1">
        <text>N-terminal N-formyl-L-methionyl-[peptide] + H2O = N-terminal L-methionyl-[peptide] + formate</text>
        <dbReference type="Rhea" id="RHEA:24420"/>
        <dbReference type="Rhea" id="RHEA-COMP:10639"/>
        <dbReference type="Rhea" id="RHEA-COMP:10640"/>
        <dbReference type="ChEBI" id="CHEBI:15377"/>
        <dbReference type="ChEBI" id="CHEBI:15740"/>
        <dbReference type="ChEBI" id="CHEBI:49298"/>
        <dbReference type="ChEBI" id="CHEBI:64731"/>
        <dbReference type="EC" id="3.5.1.88"/>
    </reaction>
</comment>
<comment type="cofactor">
    <cofactor evidence="1">
        <name>Fe(2+)</name>
        <dbReference type="ChEBI" id="CHEBI:29033"/>
    </cofactor>
    <text evidence="1">Binds 1 Fe(2+) ion.</text>
</comment>
<comment type="similarity">
    <text evidence="1">Belongs to the polypeptide deformylase family.</text>
</comment>
<sequence length="167" mass="18448">MAIRRICELPEPVLRKKAKKVPSIDGSIQTLIDDMIETMNSADGAGLAAPQVGVSLRLVVFREPDTKEATVLINPEIIKKEGQRQVTEGCLSIPGYFGELTRAETVTAKGLDRHGKACRIKGTGIVAQLLEHETEHLDGILYIDHLESEDQLHEIGPDDEMPEEIRE</sequence>
<keyword id="KW-0378">Hydrolase</keyword>
<keyword id="KW-0408">Iron</keyword>
<keyword id="KW-0479">Metal-binding</keyword>
<keyword id="KW-0648">Protein biosynthesis</keyword>
<name>DEF_DEHMB</name>
<protein>
    <recommendedName>
        <fullName evidence="1">Peptide deformylase</fullName>
        <shortName evidence="1">PDF</shortName>
        <ecNumber evidence="1">3.5.1.88</ecNumber>
    </recommendedName>
    <alternativeName>
        <fullName evidence="1">Polypeptide deformylase</fullName>
    </alternativeName>
</protein>
<organism>
    <name type="scientific">Dehalococcoides mccartyi (strain ATCC BAA-2100 / JCM 16839 / KCTC 5957 / BAV1)</name>
    <dbReference type="NCBI Taxonomy" id="216389"/>
    <lineage>
        <taxon>Bacteria</taxon>
        <taxon>Bacillati</taxon>
        <taxon>Chloroflexota</taxon>
        <taxon>Dehalococcoidia</taxon>
        <taxon>Dehalococcoidales</taxon>
        <taxon>Dehalococcoidaceae</taxon>
        <taxon>Dehalococcoides</taxon>
    </lineage>
</organism>
<proteinExistence type="inferred from homology"/>
<feature type="chain" id="PRO_1000076942" description="Peptide deformylase">
    <location>
        <begin position="1"/>
        <end position="167"/>
    </location>
</feature>
<feature type="active site" evidence="1">
    <location>
        <position position="133"/>
    </location>
</feature>
<feature type="binding site" evidence="1">
    <location>
        <position position="90"/>
    </location>
    <ligand>
        <name>Fe cation</name>
        <dbReference type="ChEBI" id="CHEBI:24875"/>
    </ligand>
</feature>
<feature type="binding site" evidence="1">
    <location>
        <position position="132"/>
    </location>
    <ligand>
        <name>Fe cation</name>
        <dbReference type="ChEBI" id="CHEBI:24875"/>
    </ligand>
</feature>
<feature type="binding site" evidence="1">
    <location>
        <position position="136"/>
    </location>
    <ligand>
        <name>Fe cation</name>
        <dbReference type="ChEBI" id="CHEBI:24875"/>
    </ligand>
</feature>
<accession>A5FRA7</accession>
<evidence type="ECO:0000255" key="1">
    <source>
        <dbReference type="HAMAP-Rule" id="MF_00163"/>
    </source>
</evidence>